<gene>
    <name type="ordered locus">BUsg_564</name>
</gene>
<name>Y564_BUCAP</name>
<reference key="1">
    <citation type="journal article" date="2002" name="Science">
        <title>50 million years of genomic stasis in endosymbiotic bacteria.</title>
        <authorList>
            <person name="Tamas I."/>
            <person name="Klasson L."/>
            <person name="Canbaeck B."/>
            <person name="Naeslund A.K."/>
            <person name="Eriksson A.-S."/>
            <person name="Wernegreen J.J."/>
            <person name="Sandstroem J.P."/>
            <person name="Moran N.A."/>
            <person name="Andersson S.G.E."/>
        </authorList>
    </citation>
    <scope>NUCLEOTIDE SEQUENCE [LARGE SCALE GENOMIC DNA]</scope>
    <source>
        <strain>Sg</strain>
    </source>
</reference>
<accession>Q8K905</accession>
<sequence length="112" mass="13192">MSSNVTLVDKLNPIRHKELKVKIDEICHKSLKNLKNTSKILIEEKKHPISSTKVSINYIENENENKNNLINLENFYKKYLLKFNDFIMKKKLFLNPLLSPLLKVLPTIHSIY</sequence>
<evidence type="ECO:0000305" key="1"/>
<organism>
    <name type="scientific">Buchnera aphidicola subsp. Schizaphis graminum (strain Sg)</name>
    <dbReference type="NCBI Taxonomy" id="198804"/>
    <lineage>
        <taxon>Bacteria</taxon>
        <taxon>Pseudomonadati</taxon>
        <taxon>Pseudomonadota</taxon>
        <taxon>Gammaproteobacteria</taxon>
        <taxon>Enterobacterales</taxon>
        <taxon>Erwiniaceae</taxon>
        <taxon>Buchnera</taxon>
    </lineage>
</organism>
<dbReference type="EMBL" id="AE013218">
    <property type="protein sequence ID" value="AAM68100.1"/>
    <property type="molecule type" value="Genomic_DNA"/>
</dbReference>
<dbReference type="RefSeq" id="WP_011054066.1">
    <property type="nucleotide sequence ID" value="NC_004061.1"/>
</dbReference>
<dbReference type="SMR" id="Q8K905"/>
<dbReference type="GeneID" id="93004042"/>
<dbReference type="KEGG" id="bas:BUsg_564"/>
<dbReference type="HOGENOM" id="CLU_2141115_0_0_6"/>
<dbReference type="Proteomes" id="UP000000416">
    <property type="component" value="Chromosome"/>
</dbReference>
<protein>
    <recommendedName>
        <fullName>Uncharacterized protein BUsg_564</fullName>
    </recommendedName>
    <alternativeName>
        <fullName>yba4</fullName>
    </alternativeName>
</protein>
<proteinExistence type="predicted"/>
<comment type="similarity">
    <text evidence="1">To Buchnera BU585.</text>
</comment>
<feature type="chain" id="PRO_0000216265" description="Uncharacterized protein BUsg_564">
    <location>
        <begin position="1"/>
        <end position="112"/>
    </location>
</feature>